<organism>
    <name type="scientific">Anaerostipes hadrus</name>
    <dbReference type="NCBI Taxonomy" id="649756"/>
    <lineage>
        <taxon>Bacteria</taxon>
        <taxon>Bacillati</taxon>
        <taxon>Bacillota</taxon>
        <taxon>Clostridia</taxon>
        <taxon>Lachnospirales</taxon>
        <taxon>Lachnospiraceae</taxon>
        <taxon>Anaerostipes</taxon>
    </lineage>
</organism>
<evidence type="ECO:0000250" key="1">
    <source>
        <dbReference type="UniProtKB" id="O29853"/>
    </source>
</evidence>
<evidence type="ECO:0000255" key="2">
    <source>
        <dbReference type="PROSITE-ProRule" id="PRU00718"/>
    </source>
</evidence>
<evidence type="ECO:0000269" key="3">
    <source>
    </source>
</evidence>
<evidence type="ECO:0000303" key="4">
    <source>
    </source>
</evidence>
<evidence type="ECO:0000305" key="5"/>
<evidence type="ECO:0000312" key="6">
    <source>
        <dbReference type="EMBL" id="CBL39175.1"/>
    </source>
</evidence>
<protein>
    <recommendedName>
        <fullName evidence="4">D-lactate dehydrogenase</fullName>
        <ecNumber evidence="3">1.1.99.6</ecNumber>
    </recommendedName>
</protein>
<accession>D4MUV9</accession>
<proteinExistence type="evidence at protein level"/>
<dbReference type="EC" id="1.1.99.6" evidence="3"/>
<dbReference type="EMBL" id="FP929061">
    <property type="protein sequence ID" value="CBL39175.1"/>
    <property type="molecule type" value="Genomic_DNA"/>
</dbReference>
<dbReference type="RefSeq" id="WP_015530696.1">
    <property type="nucleotide sequence ID" value="NC_021016.1"/>
</dbReference>
<dbReference type="SMR" id="D4MUV9"/>
<dbReference type="STRING" id="649756.ERS852387_00121"/>
<dbReference type="KEGG" id="bprl:CL2_23160"/>
<dbReference type="PATRIC" id="fig|245018.3.peg.2604"/>
<dbReference type="Proteomes" id="UP000008960">
    <property type="component" value="Chromosome"/>
</dbReference>
<dbReference type="GO" id="GO:0003973">
    <property type="term" value="F:(S)-2-hydroxy-acid oxidase activity"/>
    <property type="evidence" value="ECO:0007669"/>
    <property type="project" value="UniProtKB-EC"/>
</dbReference>
<dbReference type="GO" id="GO:0047809">
    <property type="term" value="F:D-2-hydroxy-acid dehydrogenase activity"/>
    <property type="evidence" value="ECO:0007669"/>
    <property type="project" value="RHEA"/>
</dbReference>
<dbReference type="GO" id="GO:0071949">
    <property type="term" value="F:FAD binding"/>
    <property type="evidence" value="ECO:0007669"/>
    <property type="project" value="InterPro"/>
</dbReference>
<dbReference type="FunFam" id="1.10.45.10:FF:000001">
    <property type="entry name" value="D-lactate dehydrogenase mitochondrial"/>
    <property type="match status" value="1"/>
</dbReference>
<dbReference type="Gene3D" id="3.30.465.10">
    <property type="match status" value="1"/>
</dbReference>
<dbReference type="Gene3D" id="3.30.70.2740">
    <property type="match status" value="1"/>
</dbReference>
<dbReference type="Gene3D" id="1.10.45.10">
    <property type="entry name" value="Vanillyl-alcohol Oxidase, Chain A, domain 4"/>
    <property type="match status" value="1"/>
</dbReference>
<dbReference type="InterPro" id="IPR004113">
    <property type="entry name" value="FAD-bd_oxidored_4_C"/>
</dbReference>
<dbReference type="InterPro" id="IPR016166">
    <property type="entry name" value="FAD-bd_PCMH"/>
</dbReference>
<dbReference type="InterPro" id="IPR036318">
    <property type="entry name" value="FAD-bd_PCMH-like_sf"/>
</dbReference>
<dbReference type="InterPro" id="IPR016169">
    <property type="entry name" value="FAD-bd_PCMH_sub2"/>
</dbReference>
<dbReference type="InterPro" id="IPR016164">
    <property type="entry name" value="FAD-linked_Oxase-like_C"/>
</dbReference>
<dbReference type="InterPro" id="IPR051914">
    <property type="entry name" value="FAD-linked_OxidoTrans_Type4"/>
</dbReference>
<dbReference type="InterPro" id="IPR006094">
    <property type="entry name" value="Oxid_FAD_bind_N"/>
</dbReference>
<dbReference type="InterPro" id="IPR016171">
    <property type="entry name" value="Vanillyl_alc_oxidase_C-sub2"/>
</dbReference>
<dbReference type="PANTHER" id="PTHR42934">
    <property type="entry name" value="GLYCOLATE OXIDASE SUBUNIT GLCD"/>
    <property type="match status" value="1"/>
</dbReference>
<dbReference type="PANTHER" id="PTHR42934:SF2">
    <property type="entry name" value="GLYCOLATE OXIDASE SUBUNIT GLCD"/>
    <property type="match status" value="1"/>
</dbReference>
<dbReference type="Pfam" id="PF02913">
    <property type="entry name" value="FAD-oxidase_C"/>
    <property type="match status" value="1"/>
</dbReference>
<dbReference type="Pfam" id="PF01565">
    <property type="entry name" value="FAD_binding_4"/>
    <property type="match status" value="1"/>
</dbReference>
<dbReference type="SUPFAM" id="SSF56176">
    <property type="entry name" value="FAD-binding/transporter-associated domain-like"/>
    <property type="match status" value="1"/>
</dbReference>
<dbReference type="SUPFAM" id="SSF55103">
    <property type="entry name" value="FAD-linked oxidases, C-terminal domain"/>
    <property type="match status" value="1"/>
</dbReference>
<dbReference type="PROSITE" id="PS51387">
    <property type="entry name" value="FAD_PCMH"/>
    <property type="match status" value="1"/>
</dbReference>
<name>DLD_ANAHA</name>
<feature type="chain" id="PRO_0000454851" description="D-lactate dehydrogenase">
    <location>
        <begin position="1"/>
        <end position="475"/>
    </location>
</feature>
<feature type="domain" description="FAD-binding PCMH-type" evidence="2">
    <location>
        <begin position="43"/>
        <end position="222"/>
    </location>
</feature>
<sequence>MSEYQYNKVTPEMIEKFKEIAPKRVLVGDEINEDFTHDEMAIYGKARPEVLVEATSTEEVAAVVKLCNENKIPVTPSGARTGLVGGAVSIGGGVMISLTKMNKILGYDKENFVVKIQSGVLLNDLAQDAEKQGLLYPPDPGEKFATVGGNVATNAGGMRAVKYGCTRDYVRAMTVVLPTGEIVKLGATVSKTSSGYSLLNLMIGSEGTLGIITELTLKVIPAPKSVISLIIPYENLEDCIATVPQFFMHHLAPQALEFMEKEVVMDTEKFLGKQVYPKELEGTEIGAYLLATFDGNSEEQLEDIIEQASEVVLEAGAIDVLVADTPALKKDAWAVRGALLEAIEADTVLLDECDVVVPTNKIAEFLTYTKSLEAEADFRVKSFGHAGDGNLHIYTCSNDMEEGEFKKQVAVFMDKVYAKATEFGGMISGEHGIGHGKMDYLAESLGPVQMRIMEGVKEVFDPNMILNPGKICYKL</sequence>
<comment type="function">
    <text evidence="3">Catalyzes the dehydrogenation of (R)-lactate (D-lactate) to pyruvate. Active in vitro with the artificial electron acceptor 2,6-dichlorophenolindophenol (DCPIP), but not with NAD, NADP, or cytochrome c. Also displays a very low oxidase activity in vitro on D-lactate and L-lactate with O2 as the electron acceptor, but this activity is most likely not physiological.</text>
</comment>
<comment type="catalytic activity">
    <reaction evidence="3">
        <text>(R)-lactate + A = pyruvate + AH2</text>
        <dbReference type="Rhea" id="RHEA:15089"/>
        <dbReference type="ChEBI" id="CHEBI:13193"/>
        <dbReference type="ChEBI" id="CHEBI:15361"/>
        <dbReference type="ChEBI" id="CHEBI:16004"/>
        <dbReference type="ChEBI" id="CHEBI:17499"/>
        <dbReference type="EC" id="1.1.99.6"/>
    </reaction>
</comment>
<comment type="cofactor">
    <cofactor evidence="1">
        <name>FAD</name>
        <dbReference type="ChEBI" id="CHEBI:57692"/>
    </cofactor>
    <text evidence="1">Binds 1 FAD non-covalently per subunit.</text>
</comment>
<comment type="cofactor">
    <cofactor evidence="1">
        <name>Zn(2+)</name>
        <dbReference type="ChEBI" id="CHEBI:29105"/>
    </cofactor>
    <text evidence="1">Binds 1 Zn(2+) ion per subunit.</text>
</comment>
<comment type="biophysicochemical properties">
    <kinetics>
        <KM evidence="3">0.4 mM for (R)-lactate (at pH 7.4 and 25 degrees Celsius)</KM>
        <text evidence="3">kcat is 5.2 sec(-1) with DCPIP as electron acceptor (at pH 7.4 and 25 degrees Celsius).</text>
    </kinetics>
</comment>
<comment type="similarity">
    <text evidence="5">Belongs to the FAD-binding oxidoreductase/transferase type 4 family.</text>
</comment>
<gene>
    <name evidence="6" type="ORF">CL2_23160</name>
</gene>
<keyword id="KW-0274">FAD</keyword>
<keyword id="KW-0285">Flavoprotein</keyword>
<keyword id="KW-0560">Oxidoreductase</keyword>
<keyword id="KW-0862">Zinc</keyword>
<reference key="1">
    <citation type="submission" date="2010-03" db="EMBL/GenBank/DDBJ databases">
        <title>The genome sequence of Clostridiales sp. SSC/2.</title>
        <authorList>
            <consortium name="metaHIT consortium"/>
            <person name="Pajon A."/>
            <person name="Turner K."/>
            <person name="Parkhill J."/>
            <person name="Duncan S."/>
            <person name="Flint H."/>
        </authorList>
    </citation>
    <scope>NUCLEOTIDE SEQUENCE [LARGE SCALE GENOMIC DNA]</scope>
    <source>
        <strain>SSC/2</strain>
    </source>
</reference>
<reference key="2">
    <citation type="journal article" date="2021" name="PLoS Comput. Biol.">
        <title>Experimental and computational investigation of enzyme functional annotations uncovers misannotation in the EC 1.1.3.15 enzyme class.</title>
        <authorList>
            <person name="Rembeza E."/>
            <person name="Engqvist M.K.M."/>
        </authorList>
    </citation>
    <scope>FUNCTION</scope>
    <scope>CATALYTIC ACTIVITY</scope>
    <scope>BIOPHYSICOCHEMICAL PROPERTIES</scope>
</reference>